<protein>
    <recommendedName>
        <fullName evidence="1">Glycerol-3-phosphate acyltransferase</fullName>
    </recommendedName>
    <alternativeName>
        <fullName evidence="1">Acyl-PO4 G3P acyltransferase</fullName>
    </alternativeName>
    <alternativeName>
        <fullName evidence="1">Acyl-phosphate--glycerol-3-phosphate acyltransferase</fullName>
    </alternativeName>
    <alternativeName>
        <fullName evidence="1">G3P acyltransferase</fullName>
        <shortName evidence="1">GPAT</shortName>
        <ecNumber evidence="1">2.3.1.275</ecNumber>
    </alternativeName>
    <alternativeName>
        <fullName evidence="1">Lysophosphatidic acid synthase</fullName>
        <shortName evidence="1">LPA synthase</shortName>
    </alternativeName>
</protein>
<comment type="function">
    <text evidence="1">Catalyzes the transfer of an acyl group from acyl-phosphate (acyl-PO(4)) to glycerol-3-phosphate (G3P) to form lysophosphatidic acid (LPA). This enzyme utilizes acyl-phosphate as fatty acyl donor, but not acyl-CoA or acyl-ACP.</text>
</comment>
<comment type="catalytic activity">
    <reaction evidence="1">
        <text>an acyl phosphate + sn-glycerol 3-phosphate = a 1-acyl-sn-glycero-3-phosphate + phosphate</text>
        <dbReference type="Rhea" id="RHEA:34075"/>
        <dbReference type="ChEBI" id="CHEBI:43474"/>
        <dbReference type="ChEBI" id="CHEBI:57597"/>
        <dbReference type="ChEBI" id="CHEBI:57970"/>
        <dbReference type="ChEBI" id="CHEBI:59918"/>
        <dbReference type="EC" id="2.3.1.275"/>
    </reaction>
</comment>
<comment type="pathway">
    <text evidence="1">Lipid metabolism; phospholipid metabolism.</text>
</comment>
<comment type="subunit">
    <text evidence="1">Probably interacts with PlsX.</text>
</comment>
<comment type="subcellular location">
    <subcellularLocation>
        <location evidence="1">Cell membrane</location>
        <topology evidence="1">Multi-pass membrane protein</topology>
    </subcellularLocation>
</comment>
<comment type="similarity">
    <text evidence="1">Belongs to the PlsY family.</text>
</comment>
<feature type="chain" id="PRO_0000188366" description="Glycerol-3-phosphate acyltransferase">
    <location>
        <begin position="1"/>
        <end position="217"/>
    </location>
</feature>
<feature type="transmembrane region" description="Helical" evidence="1">
    <location>
        <begin position="3"/>
        <end position="23"/>
    </location>
</feature>
<feature type="transmembrane region" description="Helical" evidence="1">
    <location>
        <begin position="56"/>
        <end position="76"/>
    </location>
</feature>
<feature type="transmembrane region" description="Helical" evidence="1">
    <location>
        <begin position="78"/>
        <end position="98"/>
    </location>
</feature>
<feature type="transmembrane region" description="Helical" evidence="1">
    <location>
        <begin position="120"/>
        <end position="140"/>
    </location>
</feature>
<feature type="transmembrane region" description="Helical" evidence="1">
    <location>
        <begin position="142"/>
        <end position="162"/>
    </location>
</feature>
<feature type="transmembrane region" description="Helical" evidence="1">
    <location>
        <begin position="163"/>
        <end position="183"/>
    </location>
</feature>
<sequence length="217" mass="23625">MKIVILLLVAYLLGSIPSGVWIGKLFFKKDIRQFGSGNTGTTNTFRVLGKPAGITVLLMDILKGTLATSLPYLFGLQGVNPLFFGVAAVLGHTFPIFANFKGGKAVATSAGMLLAYSPTFFIYSALIFVICLYLTSMVSLTSMISAVLITLSTIILPFTVPAILPTFNWLLTVIAIALTTFIFVRHRENIQRIKNGTESRLSFGLRAKKIKKKAVNK</sequence>
<accession>Q834K7</accession>
<evidence type="ECO:0000255" key="1">
    <source>
        <dbReference type="HAMAP-Rule" id="MF_01043"/>
    </source>
</evidence>
<proteinExistence type="inferred from homology"/>
<dbReference type="EC" id="2.3.1.275" evidence="1"/>
<dbReference type="EMBL" id="AE016830">
    <property type="protein sequence ID" value="AAO81421.1"/>
    <property type="molecule type" value="Genomic_DNA"/>
</dbReference>
<dbReference type="RefSeq" id="NP_815351.1">
    <property type="nucleotide sequence ID" value="NC_004668.1"/>
</dbReference>
<dbReference type="RefSeq" id="WP_002382346.1">
    <property type="nucleotide sequence ID" value="NZ_KE136528.1"/>
</dbReference>
<dbReference type="SMR" id="Q834K7"/>
<dbReference type="STRING" id="226185.EF_1643"/>
<dbReference type="EnsemblBacteria" id="AAO81421">
    <property type="protein sequence ID" value="AAO81421"/>
    <property type="gene ID" value="EF_1643"/>
</dbReference>
<dbReference type="KEGG" id="efa:EF1643"/>
<dbReference type="PATRIC" id="fig|226185.45.peg.1868"/>
<dbReference type="eggNOG" id="COG0344">
    <property type="taxonomic scope" value="Bacteria"/>
</dbReference>
<dbReference type="HOGENOM" id="CLU_081254_4_0_9"/>
<dbReference type="UniPathway" id="UPA00085"/>
<dbReference type="Proteomes" id="UP000001415">
    <property type="component" value="Chromosome"/>
</dbReference>
<dbReference type="GO" id="GO:0005886">
    <property type="term" value="C:plasma membrane"/>
    <property type="evidence" value="ECO:0007669"/>
    <property type="project" value="UniProtKB-SubCell"/>
</dbReference>
<dbReference type="GO" id="GO:0043772">
    <property type="term" value="F:acyl-phosphate glycerol-3-phosphate acyltransferase activity"/>
    <property type="evidence" value="ECO:0007669"/>
    <property type="project" value="UniProtKB-UniRule"/>
</dbReference>
<dbReference type="GO" id="GO:0008654">
    <property type="term" value="P:phospholipid biosynthetic process"/>
    <property type="evidence" value="ECO:0007669"/>
    <property type="project" value="UniProtKB-UniRule"/>
</dbReference>
<dbReference type="HAMAP" id="MF_01043">
    <property type="entry name" value="PlsY"/>
    <property type="match status" value="1"/>
</dbReference>
<dbReference type="InterPro" id="IPR003811">
    <property type="entry name" value="G3P_acylTferase_PlsY"/>
</dbReference>
<dbReference type="NCBIfam" id="TIGR00023">
    <property type="entry name" value="glycerol-3-phosphate 1-O-acyltransferase PlsY"/>
    <property type="match status" value="1"/>
</dbReference>
<dbReference type="PANTHER" id="PTHR30309:SF0">
    <property type="entry name" value="GLYCEROL-3-PHOSPHATE ACYLTRANSFERASE-RELATED"/>
    <property type="match status" value="1"/>
</dbReference>
<dbReference type="PANTHER" id="PTHR30309">
    <property type="entry name" value="INNER MEMBRANE PROTEIN YGIH"/>
    <property type="match status" value="1"/>
</dbReference>
<dbReference type="Pfam" id="PF02660">
    <property type="entry name" value="G3P_acyltransf"/>
    <property type="match status" value="1"/>
</dbReference>
<dbReference type="SMART" id="SM01207">
    <property type="entry name" value="G3P_acyltransf"/>
    <property type="match status" value="1"/>
</dbReference>
<reference key="1">
    <citation type="journal article" date="2003" name="Science">
        <title>Role of mobile DNA in the evolution of vancomycin-resistant Enterococcus faecalis.</title>
        <authorList>
            <person name="Paulsen I.T."/>
            <person name="Banerjei L."/>
            <person name="Myers G.S.A."/>
            <person name="Nelson K.E."/>
            <person name="Seshadri R."/>
            <person name="Read T.D."/>
            <person name="Fouts D.E."/>
            <person name="Eisen J.A."/>
            <person name="Gill S.R."/>
            <person name="Heidelberg J.F."/>
            <person name="Tettelin H."/>
            <person name="Dodson R.J."/>
            <person name="Umayam L.A."/>
            <person name="Brinkac L.M."/>
            <person name="Beanan M.J."/>
            <person name="Daugherty S.C."/>
            <person name="DeBoy R.T."/>
            <person name="Durkin S.A."/>
            <person name="Kolonay J.F."/>
            <person name="Madupu R."/>
            <person name="Nelson W.C."/>
            <person name="Vamathevan J.J."/>
            <person name="Tran B."/>
            <person name="Upton J."/>
            <person name="Hansen T."/>
            <person name="Shetty J."/>
            <person name="Khouri H.M."/>
            <person name="Utterback T.R."/>
            <person name="Radune D."/>
            <person name="Ketchum K.A."/>
            <person name="Dougherty B.A."/>
            <person name="Fraser C.M."/>
        </authorList>
    </citation>
    <scope>NUCLEOTIDE SEQUENCE [LARGE SCALE GENOMIC DNA]</scope>
    <source>
        <strain>ATCC 700802 / V583</strain>
    </source>
</reference>
<keyword id="KW-1003">Cell membrane</keyword>
<keyword id="KW-0444">Lipid biosynthesis</keyword>
<keyword id="KW-0443">Lipid metabolism</keyword>
<keyword id="KW-0472">Membrane</keyword>
<keyword id="KW-0594">Phospholipid biosynthesis</keyword>
<keyword id="KW-1208">Phospholipid metabolism</keyword>
<keyword id="KW-1185">Reference proteome</keyword>
<keyword id="KW-0808">Transferase</keyword>
<keyword id="KW-0812">Transmembrane</keyword>
<keyword id="KW-1133">Transmembrane helix</keyword>
<name>PLSY_ENTFA</name>
<organism>
    <name type="scientific">Enterococcus faecalis (strain ATCC 700802 / V583)</name>
    <dbReference type="NCBI Taxonomy" id="226185"/>
    <lineage>
        <taxon>Bacteria</taxon>
        <taxon>Bacillati</taxon>
        <taxon>Bacillota</taxon>
        <taxon>Bacilli</taxon>
        <taxon>Lactobacillales</taxon>
        <taxon>Enterococcaceae</taxon>
        <taxon>Enterococcus</taxon>
    </lineage>
</organism>
<gene>
    <name evidence="1" type="primary">plsY</name>
    <name type="ordered locus">EF_1643</name>
</gene>